<feature type="signal peptide" evidence="1">
    <location>
        <begin position="1"/>
        <end position="18"/>
    </location>
</feature>
<feature type="chain" id="PRO_0000015463" description="Interleukin-1-binding protein">
    <location>
        <begin position="19"/>
        <end position="326"/>
    </location>
</feature>
<feature type="domain" description="Ig-like 1">
    <location>
        <begin position="24"/>
        <end position="115"/>
    </location>
</feature>
<feature type="domain" description="Ig-like 2">
    <location>
        <begin position="122"/>
        <end position="212"/>
    </location>
</feature>
<feature type="domain" description="Ig-like 3">
    <location>
        <begin position="221"/>
        <end position="322"/>
    </location>
</feature>
<feature type="glycosylation site" description="N-linked (GlcNAc...) asparagine; by host" evidence="1">
    <location>
        <position position="80"/>
    </location>
</feature>
<feature type="glycosylation site" description="N-linked (GlcNAc...) asparagine; by host" evidence="1">
    <location>
        <position position="103"/>
    </location>
</feature>
<feature type="glycosylation site" description="N-linked (GlcNAc...) asparagine; by host" evidence="1">
    <location>
        <position position="113"/>
    </location>
</feature>
<feature type="glycosylation site" description="N-linked (GlcNAc...) asparagine; by host" evidence="1">
    <location>
        <position position="206"/>
    </location>
</feature>
<feature type="glycosylation site" description="N-linked (GlcNAc...) asparagine; by host" evidence="1">
    <location>
        <position position="237"/>
    </location>
</feature>
<feature type="disulfide bond" evidence="2">
    <location>
        <begin position="48"/>
        <end position="99"/>
    </location>
</feature>
<feature type="disulfide bond" evidence="2">
    <location>
        <begin position="143"/>
        <end position="194"/>
    </location>
</feature>
<feature type="disulfide bond" evidence="2">
    <location>
        <begin position="242"/>
        <end position="309"/>
    </location>
</feature>
<comment type="function">
    <text evidence="3">May reduce the host inflammatory response by interacting with inteleukin-1 beta (Il1b) and thus decreasing the association between IL1B and its cellular receptor.</text>
</comment>
<comment type="subunit">
    <text evidence="3">Interacts with mouse Il1b.</text>
</comment>
<comment type="subcellular location">
    <subcellularLocation>
        <location evidence="3">Secreted</location>
    </subcellularLocation>
</comment>
<comment type="similarity">
    <text evidence="4">Belongs to the interleukin-1 receptor family.</text>
</comment>
<name>IL1BP_VACCW</name>
<organism>
    <name type="scientific">Vaccinia virus (strain Western Reserve)</name>
    <name type="common">VACV</name>
    <name type="synonym">Vaccinia virus (strain WR)</name>
    <dbReference type="NCBI Taxonomy" id="10254"/>
    <lineage>
        <taxon>Viruses</taxon>
        <taxon>Varidnaviria</taxon>
        <taxon>Bamfordvirae</taxon>
        <taxon>Nucleocytoviricota</taxon>
        <taxon>Pokkesviricetes</taxon>
        <taxon>Chitovirales</taxon>
        <taxon>Poxviridae</taxon>
        <taxon>Chordopoxvirinae</taxon>
        <taxon>Orthopoxvirus</taxon>
        <taxon>Vaccinia virus</taxon>
    </lineage>
</organism>
<proteinExistence type="evidence at protein level"/>
<organismHost>
    <name type="scientific">Bos taurus</name>
    <name type="common">Bovine</name>
    <dbReference type="NCBI Taxonomy" id="9913"/>
</organismHost>
<protein>
    <recommendedName>
        <fullName>Interleukin-1-binding protein</fullName>
    </recommendedName>
    <alternativeName>
        <fullName>Protein B15</fullName>
    </alternativeName>
</protein>
<evidence type="ECO:0000255" key="1"/>
<evidence type="ECO:0000255" key="2">
    <source>
        <dbReference type="PROSITE-ProRule" id="PRU00114"/>
    </source>
</evidence>
<evidence type="ECO:0000269" key="3">
    <source>
    </source>
</evidence>
<evidence type="ECO:0000305" key="4"/>
<keyword id="KW-1015">Disulfide bond</keyword>
<keyword id="KW-0325">Glycoprotein</keyword>
<keyword id="KW-0945">Host-virus interaction</keyword>
<keyword id="KW-0393">Immunoglobulin domain</keyword>
<keyword id="KW-1185">Reference proteome</keyword>
<keyword id="KW-0677">Repeat</keyword>
<keyword id="KW-0964">Secreted</keyword>
<keyword id="KW-0732">Signal</keyword>
<keyword id="KW-0899">Viral immunoevasion</keyword>
<sequence length="326" mass="36594">MSILPVIFLSIFFYSSFVQTFNAPECIDKGQYFASFMELENEPVILPCPQINTLSSGYNILDILWEKRGADNDRIIPIDNGSNMLILNPTQSDSGIYICITTNETYCDMMSLNLTIVSVSESNIDLISYPQIVNERSTGEMVCPNINAFIASNVNADIIWSGHRRLRNKRLKQRTPGIITIEDVRKNDAGYYTCVLEYIYGGKTYNVTRIVKLEVRDKIIPSTMQLPDGIVTSIGSNLTIACRVSLRPPTTDADVFWISNGMYYEEDDGDGNGRISVANKIYMTDKRRVITSRLNINPVKEEDATTFTCMAFTIPSISKTVTVSIT</sequence>
<accession>P25212</accession>
<accession>Q76ZK8</accession>
<gene>
    <name type="primary">OPG201</name>
    <name type="ordered locus">VACWR197</name>
    <name type="ORF">B15R</name>
</gene>
<dbReference type="EMBL" id="D11079">
    <property type="protein sequence ID" value="BAA01845.1"/>
    <property type="molecule type" value="Genomic_DNA"/>
</dbReference>
<dbReference type="EMBL" id="D01018">
    <property type="protein sequence ID" value="BAA00825.1"/>
    <property type="molecule type" value="Genomic_DNA"/>
</dbReference>
<dbReference type="EMBL" id="AY243312">
    <property type="protein sequence ID" value="AAO89476.1"/>
    <property type="molecule type" value="Genomic_DNA"/>
</dbReference>
<dbReference type="PIR" id="A38472">
    <property type="entry name" value="WMVZ15"/>
</dbReference>
<dbReference type="SMR" id="P25212"/>
<dbReference type="DNASU" id="3707574"/>
<dbReference type="KEGG" id="vg:3707574"/>
<dbReference type="Proteomes" id="UP000000344">
    <property type="component" value="Genome"/>
</dbReference>
<dbReference type="GO" id="GO:0005576">
    <property type="term" value="C:extracellular region"/>
    <property type="evidence" value="ECO:0007669"/>
    <property type="project" value="UniProtKB-SubCell"/>
</dbReference>
<dbReference type="GO" id="GO:0019966">
    <property type="term" value="F:interleukin-1 binding"/>
    <property type="evidence" value="ECO:0007669"/>
    <property type="project" value="InterPro"/>
</dbReference>
<dbReference type="GO" id="GO:0004908">
    <property type="term" value="F:interleukin-1 receptor activity"/>
    <property type="evidence" value="ECO:0007669"/>
    <property type="project" value="InterPro"/>
</dbReference>
<dbReference type="GO" id="GO:0044003">
    <property type="term" value="P:symbiont-mediated perturbation of host process"/>
    <property type="evidence" value="ECO:0007669"/>
    <property type="project" value="InterPro"/>
</dbReference>
<dbReference type="FunFam" id="2.60.40.10:FF:000188">
    <property type="entry name" value="Interleukin-1 receptor accessory protein-like 1"/>
    <property type="match status" value="1"/>
</dbReference>
<dbReference type="Gene3D" id="2.60.40.10">
    <property type="entry name" value="Immunoglobulins"/>
    <property type="match status" value="3"/>
</dbReference>
<dbReference type="InterPro" id="IPR007110">
    <property type="entry name" value="Ig-like_dom"/>
</dbReference>
<dbReference type="InterPro" id="IPR036179">
    <property type="entry name" value="Ig-like_dom_sf"/>
</dbReference>
<dbReference type="InterPro" id="IPR013783">
    <property type="entry name" value="Ig-like_fold"/>
</dbReference>
<dbReference type="InterPro" id="IPR003599">
    <property type="entry name" value="Ig_sub"/>
</dbReference>
<dbReference type="InterPro" id="IPR003598">
    <property type="entry name" value="Ig_sub2"/>
</dbReference>
<dbReference type="InterPro" id="IPR004078">
    <property type="entry name" value="IL-1-bd"/>
</dbReference>
<dbReference type="InterPro" id="IPR015621">
    <property type="entry name" value="IL-1_rcpt_fam"/>
</dbReference>
<dbReference type="InterPro" id="IPR004074">
    <property type="entry name" value="IL-1_rcpt_I/II-typ"/>
</dbReference>
<dbReference type="InterPro" id="IPR013151">
    <property type="entry name" value="Immunoglobulin_dom"/>
</dbReference>
<dbReference type="PANTHER" id="PTHR11890">
    <property type="entry name" value="INTERLEUKIN-1 RECEPTOR FAMILY MEMBER"/>
    <property type="match status" value="1"/>
</dbReference>
<dbReference type="PANTHER" id="PTHR11890:SF3">
    <property type="entry name" value="INTERLEUKIN-1 RECEPTOR TYPE 2"/>
    <property type="match status" value="1"/>
</dbReference>
<dbReference type="Pfam" id="PF00047">
    <property type="entry name" value="ig"/>
    <property type="match status" value="1"/>
</dbReference>
<dbReference type="PRINTS" id="PR01540">
    <property type="entry name" value="INTRLEUKN1BP"/>
</dbReference>
<dbReference type="PRINTS" id="PR01536">
    <property type="entry name" value="INTRLKN1R12F"/>
</dbReference>
<dbReference type="SMART" id="SM00409">
    <property type="entry name" value="IG"/>
    <property type="match status" value="3"/>
</dbReference>
<dbReference type="SMART" id="SM00408">
    <property type="entry name" value="IGc2"/>
    <property type="match status" value="3"/>
</dbReference>
<dbReference type="SUPFAM" id="SSF48726">
    <property type="entry name" value="Immunoglobulin"/>
    <property type="match status" value="3"/>
</dbReference>
<dbReference type="PROSITE" id="PS50835">
    <property type="entry name" value="IG_LIKE"/>
    <property type="match status" value="3"/>
</dbReference>
<reference key="1">
    <citation type="journal article" date="1991" name="J. Gen. Virol.">
        <title>Nucleotide sequence of 42 kbp of vaccinia virus strain WR from near the right inverted terminal repeat.</title>
        <authorList>
            <person name="Smith G.L."/>
            <person name="Chan Y.S."/>
            <person name="Howard S.T."/>
        </authorList>
    </citation>
    <scope>NUCLEOTIDE SEQUENCE [GENOMIC DNA]</scope>
</reference>
<reference key="2">
    <citation type="journal article" date="1991" name="J. Gen. Virol.">
        <title>Two vaccinia virus proteins structurally related to the interleukin-1 receptor and the immunoglobulin superfamily.</title>
        <authorList>
            <person name="Smith G.L."/>
            <person name="Chan Y.S."/>
        </authorList>
    </citation>
    <scope>NUCLEOTIDE SEQUENCE [GENOMIC DNA]</scope>
</reference>
<reference key="3">
    <citation type="submission" date="2003-02" db="EMBL/GenBank/DDBJ databases">
        <title>Sequencing of the coding region of Vaccinia-WR to an average 9-fold redundancy and an error rate of 0.16/10kb.</title>
        <authorList>
            <person name="Esposito J.J."/>
            <person name="Frace A.M."/>
            <person name="Sammons S.A."/>
            <person name="Olsen-Rasmussen M."/>
            <person name="Osborne J."/>
            <person name="Wohlhueter R."/>
        </authorList>
    </citation>
    <scope>NUCLEOTIDE SEQUENCE [LARGE SCALE GENOMIC DNA]</scope>
</reference>
<reference key="4">
    <citation type="journal article" date="1992" name="Cell">
        <title>Vaccinia and cowpox viruses encode a novel secreted interleukin-1-binding protein.</title>
        <authorList>
            <person name="Spriggs M.K."/>
            <person name="Hruby D.E."/>
            <person name="Maliszewski C.R."/>
            <person name="Pickup D.J."/>
            <person name="Sims J.E."/>
            <person name="Buller R.M.L."/>
            <person name="Vanslyke J."/>
        </authorList>
    </citation>
    <scope>FUNCTION</scope>
    <scope>SUBCELLULAR LOCATION</scope>
    <scope>INTERACTION WITH MOUSE IL1B</scope>
</reference>